<proteinExistence type="inferred from homology"/>
<reference key="1">
    <citation type="journal article" date="2007" name="PLoS ONE">
        <title>Paradoxical DNA repair and peroxide resistance gene conservation in Bacillus pumilus SAFR-032.</title>
        <authorList>
            <person name="Gioia J."/>
            <person name="Yerrapragada S."/>
            <person name="Qin X."/>
            <person name="Jiang H."/>
            <person name="Igboeli O.C."/>
            <person name="Muzny D."/>
            <person name="Dugan-Rocha S."/>
            <person name="Ding Y."/>
            <person name="Hawes A."/>
            <person name="Liu W."/>
            <person name="Perez L."/>
            <person name="Kovar C."/>
            <person name="Dinh H."/>
            <person name="Lee S."/>
            <person name="Nazareth L."/>
            <person name="Blyth P."/>
            <person name="Holder M."/>
            <person name="Buhay C."/>
            <person name="Tirumalai M.R."/>
            <person name="Liu Y."/>
            <person name="Dasgupta I."/>
            <person name="Bokhetache L."/>
            <person name="Fujita M."/>
            <person name="Karouia F."/>
            <person name="Eswara Moorthy P."/>
            <person name="Siefert J."/>
            <person name="Uzman A."/>
            <person name="Buzumbo P."/>
            <person name="Verma A."/>
            <person name="Zwiya H."/>
            <person name="McWilliams B.D."/>
            <person name="Olowu A."/>
            <person name="Clinkenbeard K.D."/>
            <person name="Newcombe D."/>
            <person name="Golebiewski L."/>
            <person name="Petrosino J.F."/>
            <person name="Nicholson W.L."/>
            <person name="Fox G.E."/>
            <person name="Venkateswaran K."/>
            <person name="Highlander S.K."/>
            <person name="Weinstock G.M."/>
        </authorList>
    </citation>
    <scope>NUCLEOTIDE SEQUENCE [LARGE SCALE GENOMIC DNA]</scope>
    <source>
        <strain>SAFR-032</strain>
    </source>
</reference>
<accession>A8F994</accession>
<organism>
    <name type="scientific">Bacillus pumilus (strain SAFR-032)</name>
    <dbReference type="NCBI Taxonomy" id="315750"/>
    <lineage>
        <taxon>Bacteria</taxon>
        <taxon>Bacillati</taxon>
        <taxon>Bacillota</taxon>
        <taxon>Bacilli</taxon>
        <taxon>Bacillales</taxon>
        <taxon>Bacillaceae</taxon>
        <taxon>Bacillus</taxon>
    </lineage>
</organism>
<feature type="chain" id="PRO_1000067699" description="Small ribosomal subunit protein uS17">
    <location>
        <begin position="1"/>
        <end position="87"/>
    </location>
</feature>
<name>RS17_BACP2</name>
<evidence type="ECO:0000255" key="1">
    <source>
        <dbReference type="HAMAP-Rule" id="MF_01345"/>
    </source>
</evidence>
<evidence type="ECO:0000305" key="2"/>
<gene>
    <name evidence="1" type="primary">rpsQ</name>
    <name type="ordered locus">BPUM_0111</name>
</gene>
<comment type="function">
    <text evidence="1">One of the primary rRNA binding proteins, it binds specifically to the 5'-end of 16S ribosomal RNA.</text>
</comment>
<comment type="subunit">
    <text evidence="1">Part of the 30S ribosomal subunit.</text>
</comment>
<comment type="similarity">
    <text evidence="1">Belongs to the universal ribosomal protein uS17 family.</text>
</comment>
<sequence length="87" mass="10165">MSERNQRKVYQGRVVSDKMDKTITVVVETYKKHSLYGKRVRYSKKLKAHDENNQAKIGDIVKVMETRPLSATKRFRLVEVVEEAVII</sequence>
<protein>
    <recommendedName>
        <fullName evidence="1">Small ribosomal subunit protein uS17</fullName>
    </recommendedName>
    <alternativeName>
        <fullName evidence="2">30S ribosomal protein S17</fullName>
    </alternativeName>
</protein>
<dbReference type="EMBL" id="CP000813">
    <property type="protein sequence ID" value="ABV60811.1"/>
    <property type="molecule type" value="Genomic_DNA"/>
</dbReference>
<dbReference type="RefSeq" id="WP_012008705.1">
    <property type="nucleotide sequence ID" value="NZ_VEIS01000020.1"/>
</dbReference>
<dbReference type="SMR" id="A8F994"/>
<dbReference type="STRING" id="315750.BPUM_0111"/>
<dbReference type="GeneID" id="5619353"/>
<dbReference type="KEGG" id="bpu:BPUM_0111"/>
<dbReference type="eggNOG" id="COG0186">
    <property type="taxonomic scope" value="Bacteria"/>
</dbReference>
<dbReference type="HOGENOM" id="CLU_073626_1_0_9"/>
<dbReference type="OrthoDB" id="9811714at2"/>
<dbReference type="Proteomes" id="UP000001355">
    <property type="component" value="Chromosome"/>
</dbReference>
<dbReference type="GO" id="GO:0022627">
    <property type="term" value="C:cytosolic small ribosomal subunit"/>
    <property type="evidence" value="ECO:0007669"/>
    <property type="project" value="TreeGrafter"/>
</dbReference>
<dbReference type="GO" id="GO:0019843">
    <property type="term" value="F:rRNA binding"/>
    <property type="evidence" value="ECO:0007669"/>
    <property type="project" value="UniProtKB-UniRule"/>
</dbReference>
<dbReference type="GO" id="GO:0003735">
    <property type="term" value="F:structural constituent of ribosome"/>
    <property type="evidence" value="ECO:0007669"/>
    <property type="project" value="InterPro"/>
</dbReference>
<dbReference type="GO" id="GO:0006412">
    <property type="term" value="P:translation"/>
    <property type="evidence" value="ECO:0007669"/>
    <property type="project" value="UniProtKB-UniRule"/>
</dbReference>
<dbReference type="CDD" id="cd00364">
    <property type="entry name" value="Ribosomal_uS17"/>
    <property type="match status" value="1"/>
</dbReference>
<dbReference type="FunFam" id="2.40.50.140:FF:000026">
    <property type="entry name" value="30S ribosomal protein S17"/>
    <property type="match status" value="1"/>
</dbReference>
<dbReference type="Gene3D" id="2.40.50.140">
    <property type="entry name" value="Nucleic acid-binding proteins"/>
    <property type="match status" value="1"/>
</dbReference>
<dbReference type="HAMAP" id="MF_01345_B">
    <property type="entry name" value="Ribosomal_uS17_B"/>
    <property type="match status" value="1"/>
</dbReference>
<dbReference type="InterPro" id="IPR012340">
    <property type="entry name" value="NA-bd_OB-fold"/>
</dbReference>
<dbReference type="InterPro" id="IPR000266">
    <property type="entry name" value="Ribosomal_uS17"/>
</dbReference>
<dbReference type="InterPro" id="IPR019984">
    <property type="entry name" value="Ribosomal_uS17_bact/chlr"/>
</dbReference>
<dbReference type="InterPro" id="IPR019979">
    <property type="entry name" value="Ribosomal_uS17_CS"/>
</dbReference>
<dbReference type="NCBIfam" id="NF004123">
    <property type="entry name" value="PRK05610.1"/>
    <property type="match status" value="1"/>
</dbReference>
<dbReference type="NCBIfam" id="TIGR03635">
    <property type="entry name" value="uS17_bact"/>
    <property type="match status" value="1"/>
</dbReference>
<dbReference type="PANTHER" id="PTHR10744">
    <property type="entry name" value="40S RIBOSOMAL PROTEIN S11 FAMILY MEMBER"/>
    <property type="match status" value="1"/>
</dbReference>
<dbReference type="PANTHER" id="PTHR10744:SF1">
    <property type="entry name" value="SMALL RIBOSOMAL SUBUNIT PROTEIN US17M"/>
    <property type="match status" value="1"/>
</dbReference>
<dbReference type="Pfam" id="PF00366">
    <property type="entry name" value="Ribosomal_S17"/>
    <property type="match status" value="1"/>
</dbReference>
<dbReference type="PRINTS" id="PR00973">
    <property type="entry name" value="RIBOSOMALS17"/>
</dbReference>
<dbReference type="SUPFAM" id="SSF50249">
    <property type="entry name" value="Nucleic acid-binding proteins"/>
    <property type="match status" value="1"/>
</dbReference>
<dbReference type="PROSITE" id="PS00056">
    <property type="entry name" value="RIBOSOMAL_S17"/>
    <property type="match status" value="1"/>
</dbReference>
<keyword id="KW-0687">Ribonucleoprotein</keyword>
<keyword id="KW-0689">Ribosomal protein</keyword>
<keyword id="KW-0694">RNA-binding</keyword>
<keyword id="KW-0699">rRNA-binding</keyword>